<comment type="function">
    <text evidence="4 5">Not directly activated by nematocin (PubMed:23112335, PubMed:23112336). May modulate activity of the nematocin receptor ntr-1, leading to reduced intracellular cAMP production (PubMed:23112335). Plays a role in male mating behavior (PubMed:23112335).</text>
</comment>
<comment type="subcellular location">
    <subcellularLocation>
        <location evidence="5">Cell membrane</location>
        <topology evidence="1">Multi-pass membrane protein</topology>
    </subcellularLocation>
</comment>
<comment type="tissue specificity">
    <text evidence="4 5">Detected in the ADL sensory neurons, the RMED and RMEV motor neurons, and the PQR tail neuron (PubMed:23112336). In males, detected in SPC tail neurons involved in spicule penetration and sperm transfer, and male-specific oblique muscles involved in vulval contact (PubMed:23112335).</text>
</comment>
<comment type="disruption phenotype">
    <text evidence="4">Viable and fertile. Males have reduced reproductive success, due to a range of aberrant mating behaviors. Double knockouts with ntr-1 partially rescue the reproductive phenotypes.</text>
</comment>
<comment type="similarity">
    <text evidence="7">Belongs to the G-protein coupled receptor 1 family. Vasopressin/oxytocin receptor subfamily.</text>
</comment>
<proteinExistence type="evidence at transcript level"/>
<accession>O62169</accession>
<dbReference type="EMBL" id="JQ277479">
    <property type="protein sequence ID" value="AFJ42490.1"/>
    <property type="molecule type" value="mRNA"/>
</dbReference>
<dbReference type="EMBL" id="BX284606">
    <property type="protein sequence ID" value="CAA16265.1"/>
    <property type="molecule type" value="Genomic_DNA"/>
</dbReference>
<dbReference type="PIR" id="T20901">
    <property type="entry name" value="T20901"/>
</dbReference>
<dbReference type="RefSeq" id="NP_510477.1">
    <property type="nucleotide sequence ID" value="NM_078076.4"/>
</dbReference>
<dbReference type="SMR" id="O62169"/>
<dbReference type="FunCoup" id="O62169">
    <property type="interactions" value="50"/>
</dbReference>
<dbReference type="STRING" id="6239.F14F4.1.1"/>
<dbReference type="GlyCosmos" id="O62169">
    <property type="glycosylation" value="2 sites, No reported glycans"/>
</dbReference>
<dbReference type="PaxDb" id="6239-F14F4.1"/>
<dbReference type="EnsemblMetazoa" id="F14F4.1.1">
    <property type="protein sequence ID" value="F14F4.1.1"/>
    <property type="gene ID" value="WBGene00008808"/>
</dbReference>
<dbReference type="GeneID" id="184471"/>
<dbReference type="KEGG" id="cel:CELE_F14F4.1"/>
<dbReference type="UCSC" id="F14F4.1">
    <property type="organism name" value="c. elegans"/>
</dbReference>
<dbReference type="AGR" id="WB:WBGene00008808"/>
<dbReference type="CTD" id="184471"/>
<dbReference type="WormBase" id="F14F4.1">
    <property type="protein sequence ID" value="CE17670"/>
    <property type="gene ID" value="WBGene00008808"/>
    <property type="gene designation" value="ntr-2"/>
</dbReference>
<dbReference type="eggNOG" id="KOG3656">
    <property type="taxonomic scope" value="Eukaryota"/>
</dbReference>
<dbReference type="GeneTree" id="ENSGT00970000195859"/>
<dbReference type="HOGENOM" id="CLU_009579_15_0_1"/>
<dbReference type="InParanoid" id="O62169"/>
<dbReference type="OMA" id="VIFRGNH"/>
<dbReference type="OrthoDB" id="5987909at2759"/>
<dbReference type="PhylomeDB" id="O62169"/>
<dbReference type="PRO" id="PR:O62169"/>
<dbReference type="Proteomes" id="UP000001940">
    <property type="component" value="Chromosome X"/>
</dbReference>
<dbReference type="Bgee" id="WBGene00008808">
    <property type="expression patterns" value="Expressed in larva and 1 other cell type or tissue"/>
</dbReference>
<dbReference type="GO" id="GO:0016020">
    <property type="term" value="C:membrane"/>
    <property type="evidence" value="ECO:0000318"/>
    <property type="project" value="GO_Central"/>
</dbReference>
<dbReference type="GO" id="GO:0005886">
    <property type="term" value="C:plasma membrane"/>
    <property type="evidence" value="ECO:0007669"/>
    <property type="project" value="UniProtKB-SubCell"/>
</dbReference>
<dbReference type="GO" id="GO:0004930">
    <property type="term" value="F:G protein-coupled receptor activity"/>
    <property type="evidence" value="ECO:0007669"/>
    <property type="project" value="UniProtKB-KW"/>
</dbReference>
<dbReference type="CDD" id="cd15196">
    <property type="entry name" value="7tmA_Vasopressin_Oxytocin"/>
    <property type="match status" value="1"/>
</dbReference>
<dbReference type="Gene3D" id="1.20.1070.10">
    <property type="entry name" value="Rhodopsin 7-helix transmembrane proteins"/>
    <property type="match status" value="1"/>
</dbReference>
<dbReference type="InterPro" id="IPR000276">
    <property type="entry name" value="GPCR_Rhodpsn"/>
</dbReference>
<dbReference type="InterPro" id="IPR017452">
    <property type="entry name" value="GPCR_Rhodpsn_7TM"/>
</dbReference>
<dbReference type="InterPro" id="IPR052665">
    <property type="entry name" value="Neuropeptide-GPCR"/>
</dbReference>
<dbReference type="PANTHER" id="PTHR24224">
    <property type="entry name" value="CARDIOACCELERATORY PEPTIDE RECEPTOR-RELATED"/>
    <property type="match status" value="1"/>
</dbReference>
<dbReference type="PANTHER" id="PTHR24224:SF36">
    <property type="entry name" value="NEMATOCIN RECEPTOR 2"/>
    <property type="match status" value="1"/>
</dbReference>
<dbReference type="Pfam" id="PF00001">
    <property type="entry name" value="7tm_1"/>
    <property type="match status" value="1"/>
</dbReference>
<dbReference type="PRINTS" id="PR00237">
    <property type="entry name" value="GPCRRHODOPSN"/>
</dbReference>
<dbReference type="SUPFAM" id="SSF81321">
    <property type="entry name" value="Family A G protein-coupled receptor-like"/>
    <property type="match status" value="1"/>
</dbReference>
<dbReference type="PROSITE" id="PS50262">
    <property type="entry name" value="G_PROTEIN_RECEP_F1_2"/>
    <property type="match status" value="1"/>
</dbReference>
<keyword id="KW-0085">Behavior</keyword>
<keyword id="KW-1003">Cell membrane</keyword>
<keyword id="KW-1015">Disulfide bond</keyword>
<keyword id="KW-0297">G-protein coupled receptor</keyword>
<keyword id="KW-0325">Glycoprotein</keyword>
<keyword id="KW-0472">Membrane</keyword>
<keyword id="KW-0675">Receptor</keyword>
<keyword id="KW-1185">Reference proteome</keyword>
<keyword id="KW-0807">Transducer</keyword>
<keyword id="KW-0812">Transmembrane</keyword>
<keyword id="KW-1133">Transmembrane helix</keyword>
<sequence>MNNNTLNITNQRTAAAMSQIYFLVVYQTAVMIVSLLGNLFLLFVIFRANQVMKRRVSPVQLLIIHTCVADLLFALLSLGTEILTLRTYPQYYGSNFVCKLMRYVQMFPMYASPFLLVAISADRYQAICRPLAHFRSSRYRRPNWMAAIAWGLALVLSIPQFFVWTKHSKTGRCSTIYGQNKNTVKITYVIMFNTLAWLLPSILAAVFYYCVCKAVRLSSTKSVRAMDSQKRNGKYSSGATEDYIEELRKKSKGFRQQMSEFDRKRVQTVRLTITIVACNFFLWMPFCLINVIQALWPEISHIMFINYVAILGNLNSCLNPWIYILFNRSHVRKALCRSRRSFTEVTKKRSFENFECSSTATMNNNYNNCHAYTAFSNRSQLKFDSYATDSTSLKTNSN</sequence>
<name>NTR2_CAEEL</name>
<feature type="chain" id="PRO_0000438125" description="Nematocin receptor 2">
    <location>
        <begin position="1"/>
        <end position="398"/>
    </location>
</feature>
<feature type="topological domain" description="Extracellular" evidence="7">
    <location>
        <begin position="1"/>
        <end position="25"/>
    </location>
</feature>
<feature type="transmembrane region" description="Helical; Name=1" evidence="1">
    <location>
        <begin position="26"/>
        <end position="46"/>
    </location>
</feature>
<feature type="topological domain" description="Cytoplasmic" evidence="7">
    <location>
        <begin position="47"/>
        <end position="58"/>
    </location>
</feature>
<feature type="transmembrane region" description="Helical; Name=2" evidence="1">
    <location>
        <begin position="59"/>
        <end position="79"/>
    </location>
</feature>
<feature type="topological domain" description="Extracellular" evidence="7">
    <location>
        <begin position="80"/>
        <end position="99"/>
    </location>
</feature>
<feature type="transmembrane region" description="Helical; Name=3" evidence="1">
    <location>
        <begin position="100"/>
        <end position="120"/>
    </location>
</feature>
<feature type="topological domain" description="Cytoplasmic" evidence="7">
    <location>
        <begin position="121"/>
        <end position="143"/>
    </location>
</feature>
<feature type="transmembrane region" description="Helical; Name=4" evidence="1">
    <location>
        <begin position="144"/>
        <end position="164"/>
    </location>
</feature>
<feature type="topological domain" description="Extracellular" evidence="7">
    <location>
        <begin position="165"/>
        <end position="187"/>
    </location>
</feature>
<feature type="transmembrane region" description="Helical; Name=5" evidence="1">
    <location>
        <begin position="188"/>
        <end position="208"/>
    </location>
</feature>
<feature type="topological domain" description="Cytoplasmic" evidence="7">
    <location>
        <begin position="209"/>
        <end position="271"/>
    </location>
</feature>
<feature type="transmembrane region" description="Helical; Name=6" evidence="1">
    <location>
        <begin position="272"/>
        <end position="292"/>
    </location>
</feature>
<feature type="topological domain" description="Extracellular" evidence="7">
    <location>
        <begin position="293"/>
        <end position="302"/>
    </location>
</feature>
<feature type="transmembrane region" description="Helical; Name=7" evidence="1">
    <location>
        <begin position="303"/>
        <end position="325"/>
    </location>
</feature>
<feature type="topological domain" description="Cytoplasmic" evidence="7">
    <location>
        <begin position="326"/>
        <end position="398"/>
    </location>
</feature>
<feature type="glycosylation site" description="N-linked (GlcNAc...) asparagine" evidence="2">
    <location>
        <position position="3"/>
    </location>
</feature>
<feature type="glycosylation site" description="N-linked (GlcNAc...) asparagine" evidence="2">
    <location>
        <position position="7"/>
    </location>
</feature>
<feature type="disulfide bond" evidence="3">
    <location>
        <begin position="98"/>
        <end position="173"/>
    </location>
</feature>
<reference evidence="8" key="1">
    <citation type="journal article" date="2012" name="Science">
        <title>Vasopressin/oxytocin-related signaling regulates gustatory associative learning in C. elegans.</title>
        <authorList>
            <person name="Beets I."/>
            <person name="Janssen T."/>
            <person name="Meelkop E."/>
            <person name="Temmerman L."/>
            <person name="Suetens N."/>
            <person name="Rademakers S."/>
            <person name="Jansen G."/>
            <person name="Schoofs L."/>
        </authorList>
    </citation>
    <scope>NUCLEOTIDE SEQUENCE [MRNA]</scope>
    <scope>FUNCTION</scope>
    <scope>SUBCELLULAR LOCATION</scope>
    <scope>TISSUE SPECIFICITY</scope>
</reference>
<reference evidence="9" key="2">
    <citation type="journal article" date="1998" name="Science">
        <title>Genome sequence of the nematode C. elegans: a platform for investigating biology.</title>
        <authorList>
            <consortium name="The C. elegans sequencing consortium"/>
        </authorList>
    </citation>
    <scope>NUCLEOTIDE SEQUENCE [LARGE SCALE GENOMIC DNA]</scope>
    <source>
        <strain evidence="9">Bristol N2</strain>
    </source>
</reference>
<reference evidence="7" key="3">
    <citation type="journal article" date="2012" name="Science">
        <title>Oxytocin/vasopressin-related peptides have an ancient role in reproductive behavior.</title>
        <authorList>
            <person name="Garrison J.L."/>
            <person name="Macosko E.Z."/>
            <person name="Bernstein S."/>
            <person name="Pokala N."/>
            <person name="Albrecht D.R."/>
            <person name="Bargmann C.I."/>
        </authorList>
    </citation>
    <scope>FUNCTION</scope>
    <scope>TISSUE SPECIFICITY</scope>
    <scope>DISRUPTION PHENOTYPE</scope>
</reference>
<protein>
    <recommendedName>
        <fullName evidence="6">Nematocin receptor 2</fullName>
    </recommendedName>
</protein>
<evidence type="ECO:0000255" key="1"/>
<evidence type="ECO:0000255" key="2">
    <source>
        <dbReference type="PROSITE-ProRule" id="PRU00498"/>
    </source>
</evidence>
<evidence type="ECO:0000255" key="3">
    <source>
        <dbReference type="PROSITE-ProRule" id="PRU00521"/>
    </source>
</evidence>
<evidence type="ECO:0000269" key="4">
    <source>
    </source>
</evidence>
<evidence type="ECO:0000269" key="5">
    <source>
    </source>
</evidence>
<evidence type="ECO:0000303" key="6">
    <source>
    </source>
</evidence>
<evidence type="ECO:0000305" key="7"/>
<evidence type="ECO:0000312" key="8">
    <source>
        <dbReference type="EMBL" id="AFJ42490.1"/>
    </source>
</evidence>
<evidence type="ECO:0000312" key="9">
    <source>
        <dbReference type="Proteomes" id="UP000001940"/>
    </source>
</evidence>
<evidence type="ECO:0000312" key="10">
    <source>
        <dbReference type="WormBase" id="F14F4.1"/>
    </source>
</evidence>
<gene>
    <name evidence="6" type="primary">ntr-2</name>
    <name evidence="10" type="ORF">F14F4.1</name>
</gene>
<organism evidence="9">
    <name type="scientific">Caenorhabditis elegans</name>
    <dbReference type="NCBI Taxonomy" id="6239"/>
    <lineage>
        <taxon>Eukaryota</taxon>
        <taxon>Metazoa</taxon>
        <taxon>Ecdysozoa</taxon>
        <taxon>Nematoda</taxon>
        <taxon>Chromadorea</taxon>
        <taxon>Rhabditida</taxon>
        <taxon>Rhabditina</taxon>
        <taxon>Rhabditomorpha</taxon>
        <taxon>Rhabditoidea</taxon>
        <taxon>Rhabditidae</taxon>
        <taxon>Peloderinae</taxon>
        <taxon>Caenorhabditis</taxon>
    </lineage>
</organism>